<accession>P36748</accession>
<feature type="chain" id="PRO_0000133579" description="Minor capsid protein L2">
    <location>
        <begin position="1"/>
        <end position="518"/>
    </location>
</feature>
<feature type="region of interest" description="Disordered" evidence="2">
    <location>
        <begin position="238"/>
        <end position="262"/>
    </location>
</feature>
<feature type="short sequence motif" description="Nuclear localization signal" evidence="1">
    <location>
        <begin position="1"/>
        <end position="10"/>
    </location>
</feature>
<feature type="short sequence motif" description="Nuclear localization signal" evidence="1">
    <location>
        <begin position="510"/>
        <end position="517"/>
    </location>
</feature>
<feature type="disulfide bond" evidence="1">
    <location>
        <begin position="19"/>
        <end position="25"/>
    </location>
</feature>
<name>VL2_HPV12</name>
<organismHost>
    <name type="scientific">Homo sapiens</name>
    <name type="common">Human</name>
    <dbReference type="NCBI Taxonomy" id="9606"/>
</organismHost>
<evidence type="ECO:0000255" key="1">
    <source>
        <dbReference type="HAMAP-Rule" id="MF_04003"/>
    </source>
</evidence>
<evidence type="ECO:0000256" key="2">
    <source>
        <dbReference type="SAM" id="MobiDB-lite"/>
    </source>
</evidence>
<sequence length="518" mass="56776">MARAKRVKRDSVTHIYQTCKQAGTCPPDVLNKVEQTTVADNILKYGSGGVFFGGLGIGTGRGTGGVTGYRPLPEGPGIRVGGTPTVVRPSLVPESVGPADILPIDTIDPVEPTASSVVPLTESSATDLLPGEVETIAEINPVSEGPTIDSPVVTTSRGSSAILEVAPDPIPPTRVRVARTQYHNPAFQIITESTPAQGETSLADHILVTSGSGGQTIGSDITDIIELQEIPSRYSFEIEEPTPPRQSSTPLQRTQTTGRRRGVSLTNRRLVQQVQVDNPLFIDKPSKLVRFSFDNPVFEEDITNIFEQDLETFEEPPDRDFLDIKKLSRPQYSTTPAGYVRVSRLGTRGTIRTRSGAQIGSQVHFYRDLSSIDSEDPIELQLLGQHSGDATIVQGTVESTFVDMDIAEDPLSESIEAHSDDLLLDEAVEDFSGSQLVIGNRRSTTSYTVPRFETTRSSSYYVQDTQGYYVAYPEHRNTAEIIYPTPDIPVVVIHTHDNSGDFYLHPSLRRRKRKRKYL</sequence>
<gene>
    <name evidence="1" type="primary">L2</name>
</gene>
<organism>
    <name type="scientific">Human papillomavirus 12</name>
    <dbReference type="NCBI Taxonomy" id="10604"/>
    <lineage>
        <taxon>Viruses</taxon>
        <taxon>Monodnaviria</taxon>
        <taxon>Shotokuvirae</taxon>
        <taxon>Cossaviricota</taxon>
        <taxon>Papovaviricetes</taxon>
        <taxon>Zurhausenvirales</taxon>
        <taxon>Papillomaviridae</taxon>
        <taxon>Firstpapillomavirinae</taxon>
        <taxon>Betapapillomavirus</taxon>
        <taxon>Betapapillomavirus 1</taxon>
    </lineage>
</organism>
<protein>
    <recommendedName>
        <fullName evidence="1">Minor capsid protein L2</fullName>
    </recommendedName>
</protein>
<proteinExistence type="inferred from homology"/>
<keyword id="KW-0167">Capsid protein</keyword>
<keyword id="KW-1176">Cytoplasmic inwards viral transport</keyword>
<keyword id="KW-1015">Disulfide bond</keyword>
<keyword id="KW-0238">DNA-binding</keyword>
<keyword id="KW-1039">Host endosome</keyword>
<keyword id="KW-1040">Host Golgi apparatus</keyword>
<keyword id="KW-1048">Host nucleus</keyword>
<keyword id="KW-0945">Host-virus interaction</keyword>
<keyword id="KW-0426">Late protein</keyword>
<keyword id="KW-1177">Microtubular inwards viral transport</keyword>
<keyword id="KW-0597">Phosphoprotein</keyword>
<keyword id="KW-1163">Viral penetration into host nucleus</keyword>
<keyword id="KW-0946">Virion</keyword>
<keyword id="KW-1160">Virus entry into host cell</keyword>
<reference key="1">
    <citation type="journal article" date="1994" name="Curr. Top. Microbiol. Immunol.">
        <title>Primer-directed sequencing of human papillomavirus types.</title>
        <authorList>
            <person name="Delius H."/>
            <person name="Hofmann B."/>
        </authorList>
    </citation>
    <scope>NUCLEOTIDE SEQUENCE [GENOMIC DNA]</scope>
</reference>
<dbReference type="EMBL" id="X74466">
    <property type="protein sequence ID" value="CAA52500.1"/>
    <property type="molecule type" value="Genomic_DNA"/>
</dbReference>
<dbReference type="PIR" id="S36542">
    <property type="entry name" value="S36542"/>
</dbReference>
<dbReference type="Proteomes" id="UP000009106">
    <property type="component" value="Genome"/>
</dbReference>
<dbReference type="GO" id="GO:0043657">
    <property type="term" value="C:host cell"/>
    <property type="evidence" value="ECO:0007669"/>
    <property type="project" value="GOC"/>
</dbReference>
<dbReference type="GO" id="GO:0044174">
    <property type="term" value="C:host cell endosome"/>
    <property type="evidence" value="ECO:0007669"/>
    <property type="project" value="UniProtKB-KW"/>
</dbReference>
<dbReference type="GO" id="GO:0044177">
    <property type="term" value="C:host cell Golgi apparatus"/>
    <property type="evidence" value="ECO:0007669"/>
    <property type="project" value="UniProtKB-SubCell"/>
</dbReference>
<dbReference type="GO" id="GO:0042025">
    <property type="term" value="C:host cell nucleus"/>
    <property type="evidence" value="ECO:0007669"/>
    <property type="project" value="UniProtKB-SubCell"/>
</dbReference>
<dbReference type="GO" id="GO:0019028">
    <property type="term" value="C:viral capsid"/>
    <property type="evidence" value="ECO:0007669"/>
    <property type="project" value="UniProtKB-UniRule"/>
</dbReference>
<dbReference type="GO" id="GO:0003677">
    <property type="term" value="F:DNA binding"/>
    <property type="evidence" value="ECO:0007669"/>
    <property type="project" value="UniProtKB-UniRule"/>
</dbReference>
<dbReference type="GO" id="GO:0005198">
    <property type="term" value="F:structural molecule activity"/>
    <property type="evidence" value="ECO:0007669"/>
    <property type="project" value="UniProtKB-UniRule"/>
</dbReference>
<dbReference type="GO" id="GO:0075521">
    <property type="term" value="P:microtubule-dependent intracellular transport of viral material towards nucleus"/>
    <property type="evidence" value="ECO:0007669"/>
    <property type="project" value="UniProtKB-UniRule"/>
</dbReference>
<dbReference type="GO" id="GO:0046718">
    <property type="term" value="P:symbiont entry into host cell"/>
    <property type="evidence" value="ECO:0007669"/>
    <property type="project" value="UniProtKB-KW"/>
</dbReference>
<dbReference type="GO" id="GO:0075732">
    <property type="term" value="P:viral penetration into host nucleus"/>
    <property type="evidence" value="ECO:0007669"/>
    <property type="project" value="UniProtKB-KW"/>
</dbReference>
<dbReference type="HAMAP" id="MF_04003">
    <property type="entry name" value="PPV_L2"/>
    <property type="match status" value="1"/>
</dbReference>
<dbReference type="InterPro" id="IPR000784">
    <property type="entry name" value="Late_L2"/>
</dbReference>
<dbReference type="Pfam" id="PF00513">
    <property type="entry name" value="Late_protein_L2"/>
    <property type="match status" value="1"/>
</dbReference>
<comment type="function">
    <text evidence="1">Minor protein of the capsid that localizes along the inner surface of the virion, within the central cavities beneath the L1 pentamers. Plays a role in capsid stabilization through interaction with the major capsid protein L1. Once the virion enters the host cell, L2 escorts the genomic DNA into the nucleus by promoting escape from the endosomal compartments and traffic through the host Golgi network. Mechanistically, the C-terminus of L2 possesses a cell-penetrating peptide that protudes from the host endosome, interacts with host cytoplasmic retromer cargo and thereby mediates the capsid delivery to the host trans-Golgi network. Plays a role through its interaction with host dynein in the intracellular microtubule-dependent transport of viral capsid toward the nucleus. Mediates the viral genome import into the nucleus through binding to host importins. Once within the nucleus, L2 localizes viral genomes to host PML bodies in order to activate early gene expression for establishment of infection. Later on, promotes late gene expression by interacting with the viral E2 protein and by inhibiting its transcriptional activation functions. During virion assembly, encapsidates the genome by direct interaction with the viral DNA.</text>
</comment>
<comment type="subunit">
    <text evidence="1">Interacts with major capsid protein L1. Interacts with E2; this interaction inhibits E2 transcriptional activity but not the DNA replication function E2. Interacts with host GADD45GIP1. Interacts with host HSPA8; this interaction is required for L2 nuclear translocation. Interacts with host importins KPNB2 and KPNB3. Forms a complex with importin alpha2-beta1 heterodimers via interaction with the importin alpha2 adapter. Interacts with host DYNLT1; this interaction is essential for virus intracellular transport during entry. Interacts (via C-terminus) with host retromer subunits VPS35 and VPS29.</text>
</comment>
<comment type="subcellular location">
    <subcellularLocation>
        <location evidence="1">Virion</location>
    </subcellularLocation>
    <subcellularLocation>
        <location evidence="1">Host nucleus</location>
    </subcellularLocation>
    <subcellularLocation>
        <location evidence="1">Host early endosome</location>
    </subcellularLocation>
    <subcellularLocation>
        <location evidence="1">Host Golgi apparatus</location>
    </subcellularLocation>
</comment>
<comment type="PTM">
    <text evidence="1">Highly phosphorylated.</text>
</comment>
<comment type="similarity">
    <text evidence="1">Belongs to the papillomaviridae L2 protein family.</text>
</comment>